<proteinExistence type="inferred from homology"/>
<feature type="chain" id="PRO_0000257015" description="Chaperonin GroEL">
    <location>
        <begin position="1"/>
        <end position="547"/>
    </location>
</feature>
<feature type="binding site" evidence="1">
    <location>
        <begin position="30"/>
        <end position="33"/>
    </location>
    <ligand>
        <name>ATP</name>
        <dbReference type="ChEBI" id="CHEBI:30616"/>
    </ligand>
</feature>
<feature type="binding site" evidence="1">
    <location>
        <position position="51"/>
    </location>
    <ligand>
        <name>ATP</name>
        <dbReference type="ChEBI" id="CHEBI:30616"/>
    </ligand>
</feature>
<feature type="binding site" evidence="1">
    <location>
        <begin position="87"/>
        <end position="91"/>
    </location>
    <ligand>
        <name>ATP</name>
        <dbReference type="ChEBI" id="CHEBI:30616"/>
    </ligand>
</feature>
<feature type="binding site" evidence="1">
    <location>
        <position position="415"/>
    </location>
    <ligand>
        <name>ATP</name>
        <dbReference type="ChEBI" id="CHEBI:30616"/>
    </ligand>
</feature>
<feature type="binding site" evidence="1">
    <location>
        <position position="495"/>
    </location>
    <ligand>
        <name>ATP</name>
        <dbReference type="ChEBI" id="CHEBI:30616"/>
    </ligand>
</feature>
<gene>
    <name evidence="1" type="primary">groEL</name>
    <name evidence="1" type="synonym">groL</name>
    <name type="ordered locus">Tbd_0091</name>
</gene>
<comment type="function">
    <text evidence="1">Together with its co-chaperonin GroES, plays an essential role in assisting protein folding. The GroEL-GroES system forms a nano-cage that allows encapsulation of the non-native substrate proteins and provides a physical environment optimized to promote and accelerate protein folding.</text>
</comment>
<comment type="catalytic activity">
    <reaction evidence="1">
        <text>ATP + H2O + a folded polypeptide = ADP + phosphate + an unfolded polypeptide.</text>
        <dbReference type="EC" id="5.6.1.7"/>
    </reaction>
</comment>
<comment type="subunit">
    <text evidence="1">Forms a cylinder of 14 subunits composed of two heptameric rings stacked back-to-back. Interacts with the co-chaperonin GroES.</text>
</comment>
<comment type="subcellular location">
    <subcellularLocation>
        <location evidence="1">Cytoplasm</location>
    </subcellularLocation>
</comment>
<comment type="similarity">
    <text evidence="1">Belongs to the chaperonin (HSP60) family.</text>
</comment>
<organism>
    <name type="scientific">Thiobacillus denitrificans (strain ATCC 25259 / T1)</name>
    <dbReference type="NCBI Taxonomy" id="292415"/>
    <lineage>
        <taxon>Bacteria</taxon>
        <taxon>Pseudomonadati</taxon>
        <taxon>Pseudomonadota</taxon>
        <taxon>Betaproteobacteria</taxon>
        <taxon>Nitrosomonadales</taxon>
        <taxon>Thiobacillaceae</taxon>
        <taxon>Thiobacillus</taxon>
    </lineage>
</organism>
<reference key="1">
    <citation type="journal article" date="2006" name="J. Bacteriol.">
        <title>The genome sequence of the obligately chemolithoautotrophic, facultatively anaerobic bacterium Thiobacillus denitrificans.</title>
        <authorList>
            <person name="Beller H.R."/>
            <person name="Chain P.S."/>
            <person name="Letain T.E."/>
            <person name="Chakicherla A."/>
            <person name="Larimer F.W."/>
            <person name="Richardson P.M."/>
            <person name="Coleman M.A."/>
            <person name="Wood A.P."/>
            <person name="Kelly D.P."/>
        </authorList>
    </citation>
    <scope>NUCLEOTIDE SEQUENCE [LARGE SCALE GENOMIC DNA]</scope>
    <source>
        <strain>ATCC 25259 / T1</strain>
    </source>
</reference>
<accession>Q3SMK1</accession>
<evidence type="ECO:0000255" key="1">
    <source>
        <dbReference type="HAMAP-Rule" id="MF_00600"/>
    </source>
</evidence>
<protein>
    <recommendedName>
        <fullName evidence="1">Chaperonin GroEL</fullName>
        <ecNumber evidence="1">5.6.1.7</ecNumber>
    </recommendedName>
    <alternativeName>
        <fullName evidence="1">60 kDa chaperonin</fullName>
    </alternativeName>
    <alternativeName>
        <fullName evidence="1">Chaperonin-60</fullName>
        <shortName evidence="1">Cpn60</shortName>
    </alternativeName>
</protein>
<keyword id="KW-0067">ATP-binding</keyword>
<keyword id="KW-0143">Chaperone</keyword>
<keyword id="KW-0963">Cytoplasm</keyword>
<keyword id="KW-0413">Isomerase</keyword>
<keyword id="KW-0547">Nucleotide-binding</keyword>
<keyword id="KW-1185">Reference proteome</keyword>
<sequence length="547" mass="57562">MAAKDVRFGDSARHRMVAGVNVLADAVKVTLGPKGRNVVLDRSFGAPTVTKDGVSVAKEIELKDKLENMGAQMVKEVASKTSDVAGDGTTTATVLAQSIVNEGMKFVAAGMNPMDLKRGIDKAVNAITEELKKISKPCTTSKEIAQVGSISANSDAPIGQIIADAMDKVGKEGVITVEDGSGLENELDVVEGMQFDRGYLSPYFINNADKQMAIMDDPFILLFDKKISNIRDLLPVLEQVAKAGKPLMIVAEDVDGEALATLVVNNIRGILKTCAVKAPGFGDRRKAMLEDMAILTGGTVIAEEVGLSLEKATLQDLGRAKRIEVGKENTTIIDGAGDGNAIKGRIAQINKQIEEVTSDYDKEKLQERKAKLAGGVAVIKVGAATEVEMKEKKARVEDALHATRAAVEEGIVPGGGVALLRAKAAAAAIKGDNHDQDAGVKIVLRAIEEPLRQIVKNCGDEPSVVVNKVLEGEGNFGYNAGTSEYGDMVAMGVLDPTKVTRTALQNAASIAGLMLTTDCMVADLPEDKAPAMPMGGGMGDMGGMGMM</sequence>
<name>CH60_THIDA</name>
<dbReference type="EC" id="5.6.1.7" evidence="1"/>
<dbReference type="EMBL" id="CP000116">
    <property type="protein sequence ID" value="AAZ96044.1"/>
    <property type="molecule type" value="Genomic_DNA"/>
</dbReference>
<dbReference type="RefSeq" id="WP_011310604.1">
    <property type="nucleotide sequence ID" value="NC_007404.1"/>
</dbReference>
<dbReference type="SMR" id="Q3SMK1"/>
<dbReference type="STRING" id="292415.Tbd_0091"/>
<dbReference type="KEGG" id="tbd:Tbd_0091"/>
<dbReference type="eggNOG" id="COG0459">
    <property type="taxonomic scope" value="Bacteria"/>
</dbReference>
<dbReference type="HOGENOM" id="CLU_016503_3_0_4"/>
<dbReference type="OrthoDB" id="9766614at2"/>
<dbReference type="Proteomes" id="UP000008291">
    <property type="component" value="Chromosome"/>
</dbReference>
<dbReference type="GO" id="GO:0005737">
    <property type="term" value="C:cytoplasm"/>
    <property type="evidence" value="ECO:0007669"/>
    <property type="project" value="UniProtKB-SubCell"/>
</dbReference>
<dbReference type="GO" id="GO:0005524">
    <property type="term" value="F:ATP binding"/>
    <property type="evidence" value="ECO:0007669"/>
    <property type="project" value="UniProtKB-UniRule"/>
</dbReference>
<dbReference type="GO" id="GO:0140662">
    <property type="term" value="F:ATP-dependent protein folding chaperone"/>
    <property type="evidence" value="ECO:0007669"/>
    <property type="project" value="InterPro"/>
</dbReference>
<dbReference type="GO" id="GO:0016853">
    <property type="term" value="F:isomerase activity"/>
    <property type="evidence" value="ECO:0007669"/>
    <property type="project" value="UniProtKB-KW"/>
</dbReference>
<dbReference type="GO" id="GO:0051082">
    <property type="term" value="F:unfolded protein binding"/>
    <property type="evidence" value="ECO:0007669"/>
    <property type="project" value="UniProtKB-UniRule"/>
</dbReference>
<dbReference type="GO" id="GO:0042026">
    <property type="term" value="P:protein refolding"/>
    <property type="evidence" value="ECO:0007669"/>
    <property type="project" value="UniProtKB-UniRule"/>
</dbReference>
<dbReference type="CDD" id="cd03344">
    <property type="entry name" value="GroEL"/>
    <property type="match status" value="1"/>
</dbReference>
<dbReference type="FunFam" id="1.10.560.10:FF:000001">
    <property type="entry name" value="60 kDa chaperonin"/>
    <property type="match status" value="1"/>
</dbReference>
<dbReference type="FunFam" id="3.50.7.10:FF:000001">
    <property type="entry name" value="60 kDa chaperonin"/>
    <property type="match status" value="1"/>
</dbReference>
<dbReference type="Gene3D" id="3.50.7.10">
    <property type="entry name" value="GroEL"/>
    <property type="match status" value="1"/>
</dbReference>
<dbReference type="Gene3D" id="1.10.560.10">
    <property type="entry name" value="GroEL-like equatorial domain"/>
    <property type="match status" value="1"/>
</dbReference>
<dbReference type="Gene3D" id="3.30.260.10">
    <property type="entry name" value="TCP-1-like chaperonin intermediate domain"/>
    <property type="match status" value="1"/>
</dbReference>
<dbReference type="HAMAP" id="MF_00600">
    <property type="entry name" value="CH60"/>
    <property type="match status" value="1"/>
</dbReference>
<dbReference type="InterPro" id="IPR018370">
    <property type="entry name" value="Chaperonin_Cpn60_CS"/>
</dbReference>
<dbReference type="InterPro" id="IPR001844">
    <property type="entry name" value="Cpn60/GroEL"/>
</dbReference>
<dbReference type="InterPro" id="IPR002423">
    <property type="entry name" value="Cpn60/GroEL/TCP-1"/>
</dbReference>
<dbReference type="InterPro" id="IPR027409">
    <property type="entry name" value="GroEL-like_apical_dom_sf"/>
</dbReference>
<dbReference type="InterPro" id="IPR027413">
    <property type="entry name" value="GROEL-like_equatorial_sf"/>
</dbReference>
<dbReference type="InterPro" id="IPR027410">
    <property type="entry name" value="TCP-1-like_intermed_sf"/>
</dbReference>
<dbReference type="NCBIfam" id="TIGR02348">
    <property type="entry name" value="GroEL"/>
    <property type="match status" value="1"/>
</dbReference>
<dbReference type="NCBIfam" id="NF000592">
    <property type="entry name" value="PRK00013.1"/>
    <property type="match status" value="1"/>
</dbReference>
<dbReference type="NCBIfam" id="NF009487">
    <property type="entry name" value="PRK12849.1"/>
    <property type="match status" value="1"/>
</dbReference>
<dbReference type="NCBIfam" id="NF009488">
    <property type="entry name" value="PRK12850.1"/>
    <property type="match status" value="1"/>
</dbReference>
<dbReference type="NCBIfam" id="NF009489">
    <property type="entry name" value="PRK12851.1"/>
    <property type="match status" value="1"/>
</dbReference>
<dbReference type="PANTHER" id="PTHR45633">
    <property type="entry name" value="60 KDA HEAT SHOCK PROTEIN, MITOCHONDRIAL"/>
    <property type="match status" value="1"/>
</dbReference>
<dbReference type="Pfam" id="PF00118">
    <property type="entry name" value="Cpn60_TCP1"/>
    <property type="match status" value="1"/>
</dbReference>
<dbReference type="PRINTS" id="PR00298">
    <property type="entry name" value="CHAPERONIN60"/>
</dbReference>
<dbReference type="SUPFAM" id="SSF52029">
    <property type="entry name" value="GroEL apical domain-like"/>
    <property type="match status" value="1"/>
</dbReference>
<dbReference type="SUPFAM" id="SSF48592">
    <property type="entry name" value="GroEL equatorial domain-like"/>
    <property type="match status" value="1"/>
</dbReference>
<dbReference type="SUPFAM" id="SSF54849">
    <property type="entry name" value="GroEL-intermediate domain like"/>
    <property type="match status" value="1"/>
</dbReference>
<dbReference type="PROSITE" id="PS00296">
    <property type="entry name" value="CHAPERONINS_CPN60"/>
    <property type="match status" value="1"/>
</dbReference>